<dbReference type="EMBL" id="AE014075">
    <property type="protein sequence ID" value="AAN79814.1"/>
    <property type="molecule type" value="Genomic_DNA"/>
</dbReference>
<dbReference type="RefSeq" id="WP_001196460.1">
    <property type="nucleotide sequence ID" value="NZ_CP051263.1"/>
</dbReference>
<dbReference type="SMR" id="P0ABX3"/>
<dbReference type="STRING" id="199310.c1343"/>
<dbReference type="GeneID" id="86863569"/>
<dbReference type="KEGG" id="ecc:c1343"/>
<dbReference type="eggNOG" id="COG1558">
    <property type="taxonomic scope" value="Bacteria"/>
</dbReference>
<dbReference type="HOGENOM" id="CLU_123272_1_0_6"/>
<dbReference type="BioCyc" id="ECOL199310:C1343-MONOMER"/>
<dbReference type="Proteomes" id="UP000001410">
    <property type="component" value="Chromosome"/>
</dbReference>
<dbReference type="GO" id="GO:0030694">
    <property type="term" value="C:bacterial-type flagellum basal body, rod"/>
    <property type="evidence" value="ECO:0007669"/>
    <property type="project" value="InterPro"/>
</dbReference>
<dbReference type="GO" id="GO:0071978">
    <property type="term" value="P:bacterial-type flagellum-dependent swarming motility"/>
    <property type="evidence" value="ECO:0007669"/>
    <property type="project" value="TreeGrafter"/>
</dbReference>
<dbReference type="InterPro" id="IPR001444">
    <property type="entry name" value="Flag_bb_rod_N"/>
</dbReference>
<dbReference type="InterPro" id="IPR019776">
    <property type="entry name" value="Flagellar_basal_body_rod_CS"/>
</dbReference>
<dbReference type="InterPro" id="IPR010930">
    <property type="entry name" value="Flg_bb/hook_C_dom"/>
</dbReference>
<dbReference type="InterPro" id="IPR006299">
    <property type="entry name" value="FlgC"/>
</dbReference>
<dbReference type="NCBIfam" id="TIGR01395">
    <property type="entry name" value="FlgC"/>
    <property type="match status" value="1"/>
</dbReference>
<dbReference type="PANTHER" id="PTHR30435:SF2">
    <property type="entry name" value="FLAGELLAR BASAL-BODY ROD PROTEIN FLGC"/>
    <property type="match status" value="1"/>
</dbReference>
<dbReference type="PANTHER" id="PTHR30435">
    <property type="entry name" value="FLAGELLAR PROTEIN"/>
    <property type="match status" value="1"/>
</dbReference>
<dbReference type="Pfam" id="PF00460">
    <property type="entry name" value="Flg_bb_rod"/>
    <property type="match status" value="1"/>
</dbReference>
<dbReference type="Pfam" id="PF06429">
    <property type="entry name" value="Flg_bbr_C"/>
    <property type="match status" value="1"/>
</dbReference>
<dbReference type="PROSITE" id="PS00588">
    <property type="entry name" value="FLAGELLA_BB_ROD"/>
    <property type="match status" value="1"/>
</dbReference>
<feature type="chain" id="PRO_0000180805" description="Flagellar basal-body rod protein FlgC">
    <location>
        <begin position="1"/>
        <end position="134"/>
    </location>
</feature>
<protein>
    <recommendedName>
        <fullName>Flagellar basal-body rod protein FlgC</fullName>
    </recommendedName>
    <alternativeName>
        <fullName>Putative proximal rod protein</fullName>
    </alternativeName>
</protein>
<reference key="1">
    <citation type="journal article" date="2002" name="Proc. Natl. Acad. Sci. U.S.A.">
        <title>Extensive mosaic structure revealed by the complete genome sequence of uropathogenic Escherichia coli.</title>
        <authorList>
            <person name="Welch R.A."/>
            <person name="Burland V."/>
            <person name="Plunkett G. III"/>
            <person name="Redford P."/>
            <person name="Roesch P."/>
            <person name="Rasko D."/>
            <person name="Buckles E.L."/>
            <person name="Liou S.-R."/>
            <person name="Boutin A."/>
            <person name="Hackett J."/>
            <person name="Stroud D."/>
            <person name="Mayhew G.F."/>
            <person name="Rose D.J."/>
            <person name="Zhou S."/>
            <person name="Schwartz D.C."/>
            <person name="Perna N.T."/>
            <person name="Mobley H.L.T."/>
            <person name="Donnenberg M.S."/>
            <person name="Blattner F.R."/>
        </authorList>
    </citation>
    <scope>NUCLEOTIDE SEQUENCE [LARGE SCALE GENOMIC DNA]</scope>
    <source>
        <strain>CFT073 / ATCC 700928 / UPEC</strain>
    </source>
</reference>
<evidence type="ECO:0000250" key="1"/>
<evidence type="ECO:0000305" key="2"/>
<organism>
    <name type="scientific">Escherichia coli O6:H1 (strain CFT073 / ATCC 700928 / UPEC)</name>
    <dbReference type="NCBI Taxonomy" id="199310"/>
    <lineage>
        <taxon>Bacteria</taxon>
        <taxon>Pseudomonadati</taxon>
        <taxon>Pseudomonadota</taxon>
        <taxon>Gammaproteobacteria</taxon>
        <taxon>Enterobacterales</taxon>
        <taxon>Enterobacteriaceae</taxon>
        <taxon>Escherichia</taxon>
    </lineage>
</organism>
<name>FLGC_ECOL6</name>
<comment type="subunit">
    <text evidence="1">The basal body constitutes a major portion of the flagellar organelle and consists of four rings (L,P,S, and M) mounted on a central rod. The rod consists of about 26 subunits of FlgG in the distal portion, and FlgB, FlgC and FlgF are thought to build up the proximal portion of the rod with about 6 subunits each (By similarity).</text>
</comment>
<comment type="subcellular location">
    <subcellularLocation>
        <location evidence="1">Bacterial flagellum basal body</location>
    </subcellularLocation>
</comment>
<comment type="similarity">
    <text evidence="2">Belongs to the flagella basal body rod proteins family.</text>
</comment>
<accession>P0ABX3</accession>
<accession>P75935</accession>
<keyword id="KW-0975">Bacterial flagellum</keyword>
<keyword id="KW-1185">Reference proteome</keyword>
<proteinExistence type="inferred from homology"/>
<sequence length="134" mass="13968">MALLNIFDIAGSALTAQSQRLNVAASNLANADSVTGPDGQPYRAKQVVFQVNAAPGAATGGVKVADVIESQAPDKLVYEPGNPLADAKGYVKMPNVDVVGEMVNTMSASRSYQANVEVLNTVKSMMLKTLTLGQ</sequence>
<gene>
    <name type="primary">flgC</name>
    <name type="ordered locus">c1343</name>
</gene>